<name>TENR_MOUSE</name>
<feature type="signal peptide" evidence="3">
    <location>
        <begin position="1"/>
        <end position="31"/>
    </location>
</feature>
<feature type="chain" id="PRO_0000007748" description="Tenascin-R">
    <location>
        <begin position="32"/>
        <end position="1358"/>
    </location>
</feature>
<feature type="domain" description="EGF-like 1">
    <location>
        <begin position="188"/>
        <end position="199"/>
    </location>
</feature>
<feature type="domain" description="EGF-like 2">
    <location>
        <begin position="219"/>
        <end position="230"/>
    </location>
</feature>
<feature type="domain" description="EGF-like 3">
    <location>
        <begin position="250"/>
        <end position="261"/>
    </location>
</feature>
<feature type="domain" description="EGF-like 4">
    <location>
        <begin position="281"/>
        <end position="292"/>
    </location>
</feature>
<feature type="domain" description="EGF-like 5">
    <location>
        <begin position="312"/>
        <end position="323"/>
    </location>
</feature>
<feature type="domain" description="Fibronectin type-III 1" evidence="4">
    <location>
        <begin position="328"/>
        <end position="420"/>
    </location>
</feature>
<feature type="domain" description="Fibronectin type-III 2" evidence="4">
    <location>
        <begin position="421"/>
        <end position="505"/>
    </location>
</feature>
<feature type="domain" description="Fibronectin type-III 3" evidence="4">
    <location>
        <begin position="506"/>
        <end position="597"/>
    </location>
</feature>
<feature type="domain" description="Fibronectin type-III 4" evidence="4">
    <location>
        <begin position="598"/>
        <end position="687"/>
    </location>
</feature>
<feature type="domain" description="Fibronectin type-III 5" evidence="4">
    <location>
        <begin position="688"/>
        <end position="777"/>
    </location>
</feature>
<feature type="domain" description="Fibronectin type-III 6" evidence="4">
    <location>
        <begin position="778"/>
        <end position="865"/>
    </location>
</feature>
<feature type="domain" description="Fibronectin type-III 7" evidence="4">
    <location>
        <begin position="866"/>
        <end position="955"/>
    </location>
</feature>
<feature type="domain" description="Fibronectin type-III 8" evidence="4">
    <location>
        <begin position="956"/>
        <end position="1042"/>
    </location>
</feature>
<feature type="domain" description="Fibronectin type-III 9" evidence="4">
    <location>
        <begin position="1043"/>
        <end position="1131"/>
    </location>
</feature>
<feature type="domain" description="Fibrinogen C-terminal" evidence="5">
    <location>
        <begin position="1129"/>
        <end position="1344"/>
    </location>
</feature>
<feature type="region of interest" description="Disordered" evidence="6">
    <location>
        <begin position="37"/>
        <end position="58"/>
    </location>
</feature>
<feature type="coiled-coil region" evidence="3">
    <location>
        <begin position="127"/>
        <end position="157"/>
    </location>
</feature>
<feature type="modified residue" description="Phosphoserine" evidence="2">
    <location>
        <position position="724"/>
    </location>
</feature>
<feature type="glycosylation site" description="N-linked (GlcNAc...) asparagine" evidence="3">
    <location>
        <position position="55"/>
    </location>
</feature>
<feature type="glycosylation site" description="O-linked (Xyl...) (chondroitin sulfate) serine" evidence="3">
    <location>
        <position position="176"/>
    </location>
</feature>
<feature type="glycosylation site" description="N-linked (GlcNAc...) asparagine" evidence="3">
    <location>
        <position position="180"/>
    </location>
</feature>
<feature type="glycosylation site" description="N-linked (GlcNAc...) asparagine" evidence="3">
    <location>
        <position position="198"/>
    </location>
</feature>
<feature type="glycosylation site" description="O-linked (Xyl...) (chondroitin sulfate) serine" evidence="3">
    <location>
        <position position="271"/>
    </location>
</feature>
<feature type="glycosylation site" description="N-linked (GlcNAc...) asparagine" evidence="3">
    <location>
        <position position="278"/>
    </location>
</feature>
<feature type="glycosylation site" description="O-linked (Xyl...) (chondroitin sulfate) serine" evidence="3">
    <location>
        <position position="302"/>
    </location>
</feature>
<feature type="glycosylation site" description="N-linked (GlcNAc...) asparagine" evidence="3">
    <location>
        <position position="392"/>
    </location>
</feature>
<feature type="glycosylation site" description="N-linked (GlcNAc...) asparagine" evidence="3">
    <location>
        <position position="470"/>
    </location>
</feature>
<feature type="glycosylation site" description="N-linked (GlcNAc...) asparagine" evidence="3">
    <location>
        <position position="581"/>
    </location>
</feature>
<feature type="glycosylation site" description="N-linked (GlcNAc...) asparagine" evidence="3">
    <location>
        <position position="791"/>
    </location>
</feature>
<feature type="glycosylation site" description="N-linked (GlcNAc...) asparagine" evidence="3">
    <location>
        <position position="869"/>
    </location>
</feature>
<feature type="glycosylation site" description="N-linked (GlcNAc...) asparagine" evidence="3">
    <location>
        <position position="874"/>
    </location>
</feature>
<feature type="glycosylation site" description="N-linked (GlcNAc...) asparagine" evidence="3">
    <location>
        <position position="1036"/>
    </location>
</feature>
<feature type="glycosylation site" description="N-linked (GlcNAc...) asparagine" evidence="3">
    <location>
        <position position="1046"/>
    </location>
</feature>
<feature type="glycosylation site" description="N-linked (GlcNAc...) asparagine" evidence="3">
    <location>
        <position position="1261"/>
    </location>
</feature>
<feature type="disulfide bond" evidence="5">
    <location>
        <begin position="297"/>
        <end position="307"/>
    </location>
</feature>
<feature type="disulfide bond" evidence="5">
    <location>
        <begin position="314"/>
        <end position="323"/>
    </location>
</feature>
<feature type="splice variant" id="VSP_012994" description="In isoform 2." evidence="13">
    <location>
        <begin position="773"/>
        <end position="862"/>
    </location>
</feature>
<feature type="sequence conflict" description="In Ref. 1; BAC30335." evidence="13" ref="1">
    <original>Y</original>
    <variation>H</variation>
    <location>
        <position position="54"/>
    </location>
</feature>
<dbReference type="EMBL" id="AK039390">
    <property type="protein sequence ID" value="BAC30335.1"/>
    <property type="molecule type" value="mRNA"/>
</dbReference>
<dbReference type="EMBL" id="BC132392">
    <property type="protein sequence ID" value="AAI32393.1"/>
    <property type="molecule type" value="mRNA"/>
</dbReference>
<dbReference type="EMBL" id="BC138043">
    <property type="protein sequence ID" value="AAI38044.1"/>
    <property type="molecule type" value="mRNA"/>
</dbReference>
<dbReference type="EMBL" id="AJ005844">
    <property type="protein sequence ID" value="CAA06739.1"/>
    <property type="molecule type" value="mRNA"/>
</dbReference>
<dbReference type="CCDS" id="CCDS15403.1">
    <molecule id="Q8BYI9-1"/>
</dbReference>
<dbReference type="RefSeq" id="NP_071707.2">
    <molecule id="Q8BYI9-1"/>
    <property type="nucleotide sequence ID" value="NM_022312.3"/>
</dbReference>
<dbReference type="RefSeq" id="XP_006496805.1">
    <molecule id="Q8BYI9-1"/>
    <property type="nucleotide sequence ID" value="XM_006496742.5"/>
</dbReference>
<dbReference type="RefSeq" id="XP_006496806.1">
    <molecule id="Q8BYI9-1"/>
    <property type="nucleotide sequence ID" value="XM_006496743.4"/>
</dbReference>
<dbReference type="RefSeq" id="XP_006496807.1">
    <molecule id="Q8BYI9-1"/>
    <property type="nucleotide sequence ID" value="XM_006496744.5"/>
</dbReference>
<dbReference type="RefSeq" id="XP_030108834.1">
    <molecule id="Q8BYI9-1"/>
    <property type="nucleotide sequence ID" value="XM_030252974.2"/>
</dbReference>
<dbReference type="RefSeq" id="XP_030108835.1">
    <molecule id="Q8BYI9-1"/>
    <property type="nucleotide sequence ID" value="XM_030252975.2"/>
</dbReference>
<dbReference type="RefSeq" id="XP_036019452.1">
    <molecule id="Q8BYI9-1"/>
    <property type="nucleotide sequence ID" value="XM_036163559.1"/>
</dbReference>
<dbReference type="RefSeq" id="XP_036019453.1">
    <molecule id="Q8BYI9-1"/>
    <property type="nucleotide sequence ID" value="XM_036163560.1"/>
</dbReference>
<dbReference type="SMR" id="Q8BYI9"/>
<dbReference type="BioGRID" id="204272">
    <property type="interactions" value="28"/>
</dbReference>
<dbReference type="ComplexPortal" id="CPX-1033">
    <property type="entry name" value="Tenascin-R complex"/>
</dbReference>
<dbReference type="FunCoup" id="Q8BYI9">
    <property type="interactions" value="612"/>
</dbReference>
<dbReference type="IntAct" id="Q8BYI9">
    <property type="interactions" value="15"/>
</dbReference>
<dbReference type="MINT" id="Q8BYI9"/>
<dbReference type="STRING" id="10090.ENSMUSP00000141553"/>
<dbReference type="GlyConnect" id="590">
    <property type="glycosylation" value="25 N-Linked glycans (5 sites), 2 O-Linked glycans"/>
</dbReference>
<dbReference type="GlyCosmos" id="Q8BYI9">
    <property type="glycosylation" value="13 sites, 39 glycans"/>
</dbReference>
<dbReference type="GlyGen" id="Q8BYI9">
    <property type="glycosylation" value="18 sites, 45 N-linked glycans (10 sites), 3 O-linked glycans (1 site)"/>
</dbReference>
<dbReference type="iPTMnet" id="Q8BYI9"/>
<dbReference type="MetOSite" id="Q8BYI9"/>
<dbReference type="PhosphoSitePlus" id="Q8BYI9"/>
<dbReference type="SwissPalm" id="Q8BYI9"/>
<dbReference type="PaxDb" id="10090-ENSMUSP00000107298"/>
<dbReference type="PeptideAtlas" id="Q8BYI9"/>
<dbReference type="ProteomicsDB" id="263275">
    <molecule id="Q8BYI9-1"/>
</dbReference>
<dbReference type="ProteomicsDB" id="263276">
    <molecule id="Q8BYI9-2"/>
</dbReference>
<dbReference type="Antibodypedia" id="20571">
    <property type="antibodies" value="134 antibodies from 25 providers"/>
</dbReference>
<dbReference type="DNASU" id="21960"/>
<dbReference type="Ensembl" id="ENSMUST00000111669.9">
    <molecule id="Q8BYI9-1"/>
    <property type="protein sequence ID" value="ENSMUSP00000107298.4"/>
    <property type="gene ID" value="ENSMUSG00000015829.14"/>
</dbReference>
<dbReference type="Ensembl" id="ENSMUST00000192069.6">
    <molecule id="Q8BYI9-1"/>
    <property type="protein sequence ID" value="ENSMUSP00000141553.2"/>
    <property type="gene ID" value="ENSMUSG00000015829.14"/>
</dbReference>
<dbReference type="GeneID" id="21960"/>
<dbReference type="KEGG" id="mmu:21960"/>
<dbReference type="UCSC" id="uc007dea.2">
    <molecule id="Q8BYI9-1"/>
    <property type="organism name" value="mouse"/>
</dbReference>
<dbReference type="AGR" id="MGI:99516"/>
<dbReference type="CTD" id="7143"/>
<dbReference type="MGI" id="MGI:99516">
    <property type="gene designation" value="Tnr"/>
</dbReference>
<dbReference type="VEuPathDB" id="HostDB:ENSMUSG00000015829"/>
<dbReference type="eggNOG" id="KOG1225">
    <property type="taxonomic scope" value="Eukaryota"/>
</dbReference>
<dbReference type="eggNOG" id="KOG2579">
    <property type="taxonomic scope" value="Eukaryota"/>
</dbReference>
<dbReference type="GeneTree" id="ENSGT00940000157761"/>
<dbReference type="HOGENOM" id="CLU_001162_0_0_1"/>
<dbReference type="InParanoid" id="Q8BYI9"/>
<dbReference type="OMA" id="YMDHTSD"/>
<dbReference type="OrthoDB" id="6130531at2759"/>
<dbReference type="PhylomeDB" id="Q8BYI9"/>
<dbReference type="TreeFam" id="TF329915"/>
<dbReference type="Reactome" id="R-MMU-3000178">
    <property type="pathway name" value="ECM proteoglycans"/>
</dbReference>
<dbReference type="BioGRID-ORCS" id="21960">
    <property type="hits" value="2 hits in 78 CRISPR screens"/>
</dbReference>
<dbReference type="CD-CODE" id="CE726F99">
    <property type="entry name" value="Postsynaptic density"/>
</dbReference>
<dbReference type="ChiTaRS" id="Tnr">
    <property type="organism name" value="mouse"/>
</dbReference>
<dbReference type="PRO" id="PR:Q8BYI9"/>
<dbReference type="Proteomes" id="UP000000589">
    <property type="component" value="Chromosome 1"/>
</dbReference>
<dbReference type="RNAct" id="Q8BYI9">
    <property type="molecule type" value="protein"/>
</dbReference>
<dbReference type="Bgee" id="ENSMUSG00000015829">
    <property type="expression patterns" value="Expressed in dentate gyrus of hippocampal formation granule cell and 87 other cell types or tissues"/>
</dbReference>
<dbReference type="ExpressionAtlas" id="Q8BYI9">
    <property type="expression patterns" value="baseline and differential"/>
</dbReference>
<dbReference type="GO" id="GO:0009986">
    <property type="term" value="C:cell surface"/>
    <property type="evidence" value="ECO:0000314"/>
    <property type="project" value="MGI"/>
</dbReference>
<dbReference type="GO" id="GO:0031012">
    <property type="term" value="C:extracellular matrix"/>
    <property type="evidence" value="ECO:0000314"/>
    <property type="project" value="MGI"/>
</dbReference>
<dbReference type="GO" id="GO:0005576">
    <property type="term" value="C:extracellular region"/>
    <property type="evidence" value="ECO:0007669"/>
    <property type="project" value="UniProtKB-KW"/>
</dbReference>
<dbReference type="GO" id="GO:0098978">
    <property type="term" value="C:glutamatergic synapse"/>
    <property type="evidence" value="ECO:0000314"/>
    <property type="project" value="SynGO"/>
</dbReference>
<dbReference type="GO" id="GO:0045121">
    <property type="term" value="C:membrane raft"/>
    <property type="evidence" value="ECO:0000314"/>
    <property type="project" value="MGI"/>
</dbReference>
<dbReference type="GO" id="GO:0072534">
    <property type="term" value="C:perineuronal net"/>
    <property type="evidence" value="ECO:0000314"/>
    <property type="project" value="MGI"/>
</dbReference>
<dbReference type="GO" id="GO:0098685">
    <property type="term" value="C:Schaffer collateral - CA1 synapse"/>
    <property type="evidence" value="ECO:0000314"/>
    <property type="project" value="SynGO"/>
</dbReference>
<dbReference type="GO" id="GO:0090733">
    <property type="term" value="C:tenascin complex"/>
    <property type="evidence" value="ECO:0000353"/>
    <property type="project" value="ComplexPortal"/>
</dbReference>
<dbReference type="GO" id="GO:0046625">
    <property type="term" value="F:sphingolipid binding"/>
    <property type="evidence" value="ECO:0000304"/>
    <property type="project" value="MGI"/>
</dbReference>
<dbReference type="GO" id="GO:0008306">
    <property type="term" value="P:associative learning"/>
    <property type="evidence" value="ECO:0000315"/>
    <property type="project" value="MGI"/>
</dbReference>
<dbReference type="GO" id="GO:0048675">
    <property type="term" value="P:axon extension"/>
    <property type="evidence" value="ECO:0000314"/>
    <property type="project" value="MGI"/>
</dbReference>
<dbReference type="GO" id="GO:0048677">
    <property type="term" value="P:axon extension involved in regeneration"/>
    <property type="evidence" value="ECO:0000315"/>
    <property type="project" value="MGI"/>
</dbReference>
<dbReference type="GO" id="GO:0030198">
    <property type="term" value="P:extracellular matrix organization"/>
    <property type="evidence" value="ECO:0000315"/>
    <property type="project" value="MGI"/>
</dbReference>
<dbReference type="GO" id="GO:0035641">
    <property type="term" value="P:locomotory exploration behavior"/>
    <property type="evidence" value="ECO:0000315"/>
    <property type="project" value="MGI"/>
</dbReference>
<dbReference type="GO" id="GO:0060291">
    <property type="term" value="P:long-term synaptic potentiation"/>
    <property type="evidence" value="ECO:0000315"/>
    <property type="project" value="MGI"/>
</dbReference>
<dbReference type="GO" id="GO:0050804">
    <property type="term" value="P:modulation of chemical synaptic transmission"/>
    <property type="evidence" value="ECO:0000314"/>
    <property type="project" value="SynGO"/>
</dbReference>
<dbReference type="GO" id="GO:0030517">
    <property type="term" value="P:negative regulation of axon extension"/>
    <property type="evidence" value="ECO:0000314"/>
    <property type="project" value="MGI"/>
</dbReference>
<dbReference type="GO" id="GO:0048692">
    <property type="term" value="P:negative regulation of axon extension involved in regeneration"/>
    <property type="evidence" value="ECO:0000315"/>
    <property type="project" value="MGI"/>
</dbReference>
<dbReference type="GO" id="GO:0022408">
    <property type="term" value="P:negative regulation of cell-cell adhesion"/>
    <property type="evidence" value="ECO:0000314"/>
    <property type="project" value="MGI"/>
</dbReference>
<dbReference type="GO" id="GO:0010977">
    <property type="term" value="P:negative regulation of neuron projection development"/>
    <property type="evidence" value="ECO:0000314"/>
    <property type="project" value="ComplexPortal"/>
</dbReference>
<dbReference type="GO" id="GO:0050805">
    <property type="term" value="P:negative regulation of synaptic transmission"/>
    <property type="evidence" value="ECO:0000315"/>
    <property type="project" value="MGI"/>
</dbReference>
<dbReference type="GO" id="GO:0097402">
    <property type="term" value="P:neuroblast migration"/>
    <property type="evidence" value="ECO:0000315"/>
    <property type="project" value="MGI"/>
</dbReference>
<dbReference type="GO" id="GO:0050885">
    <property type="term" value="P:neuromuscular process controlling balance"/>
    <property type="evidence" value="ECO:0000315"/>
    <property type="project" value="MGI"/>
</dbReference>
<dbReference type="GO" id="GO:0007158">
    <property type="term" value="P:neuron cell-cell adhesion"/>
    <property type="evidence" value="ECO:0000315"/>
    <property type="project" value="MGI"/>
</dbReference>
<dbReference type="GO" id="GO:0051968">
    <property type="term" value="P:positive regulation of synaptic transmission, glutamatergic"/>
    <property type="evidence" value="ECO:0000315"/>
    <property type="project" value="MGI"/>
</dbReference>
<dbReference type="GO" id="GO:0051971">
    <property type="term" value="P:positive regulation of transmission of nerve impulse"/>
    <property type="evidence" value="ECO:0000315"/>
    <property type="project" value="MGI"/>
</dbReference>
<dbReference type="GO" id="GO:0030155">
    <property type="term" value="P:regulation of cell adhesion"/>
    <property type="evidence" value="ECO:0000314"/>
    <property type="project" value="ComplexPortal"/>
</dbReference>
<dbReference type="GO" id="GO:0045595">
    <property type="term" value="P:regulation of cell differentiation"/>
    <property type="evidence" value="ECO:0000314"/>
    <property type="project" value="ComplexPortal"/>
</dbReference>
<dbReference type="GO" id="GO:0030334">
    <property type="term" value="P:regulation of cell migration"/>
    <property type="evidence" value="ECO:0000314"/>
    <property type="project" value="ComplexPortal"/>
</dbReference>
<dbReference type="GO" id="GO:0050808">
    <property type="term" value="P:synapse organization"/>
    <property type="evidence" value="ECO:0000315"/>
    <property type="project" value="MGI"/>
</dbReference>
<dbReference type="GO" id="GO:0035249">
    <property type="term" value="P:synaptic transmission, glutamatergic"/>
    <property type="evidence" value="ECO:0000315"/>
    <property type="project" value="MGI"/>
</dbReference>
<dbReference type="GO" id="GO:0022029">
    <property type="term" value="P:telencephalon cell migration"/>
    <property type="evidence" value="ECO:0000315"/>
    <property type="project" value="MGI"/>
</dbReference>
<dbReference type="CDD" id="cd00063">
    <property type="entry name" value="FN3"/>
    <property type="match status" value="9"/>
</dbReference>
<dbReference type="CDD" id="cd00087">
    <property type="entry name" value="FReD"/>
    <property type="match status" value="1"/>
</dbReference>
<dbReference type="FunFam" id="2.60.40.10:FF:000099">
    <property type="entry name" value="Fibronectin 1"/>
    <property type="match status" value="2"/>
</dbReference>
<dbReference type="FunFam" id="2.10.25.10:FF:000001">
    <property type="entry name" value="Tenascin C"/>
    <property type="match status" value="4"/>
</dbReference>
<dbReference type="FunFam" id="2.60.40.10:FF:000201">
    <property type="entry name" value="Tenascin C"/>
    <property type="match status" value="1"/>
</dbReference>
<dbReference type="FunFam" id="2.60.40.10:FF:000207">
    <property type="entry name" value="Tenascin C"/>
    <property type="match status" value="1"/>
</dbReference>
<dbReference type="FunFam" id="3.90.215.10:FF:000001">
    <property type="entry name" value="Tenascin isoform 1"/>
    <property type="match status" value="1"/>
</dbReference>
<dbReference type="FunFam" id="2.60.40.10:FF:000609">
    <property type="entry name" value="Tenascin R"/>
    <property type="match status" value="1"/>
</dbReference>
<dbReference type="FunFam" id="2.60.40.10:FF:000682">
    <property type="entry name" value="Tenascin R"/>
    <property type="match status" value="1"/>
</dbReference>
<dbReference type="FunFam" id="2.60.40.10:FF:000691">
    <property type="entry name" value="Tenascin R"/>
    <property type="match status" value="1"/>
</dbReference>
<dbReference type="FunFam" id="2.60.40.10:FF:000722">
    <property type="entry name" value="Tenascin R"/>
    <property type="match status" value="1"/>
</dbReference>
<dbReference type="FunFam" id="2.60.40.10:FF:001249">
    <property type="entry name" value="Tenascin R"/>
    <property type="match status" value="1"/>
</dbReference>
<dbReference type="Gene3D" id="3.90.215.10">
    <property type="entry name" value="Gamma Fibrinogen, chain A, domain 1"/>
    <property type="match status" value="1"/>
</dbReference>
<dbReference type="Gene3D" id="2.60.40.10">
    <property type="entry name" value="Immunoglobulins"/>
    <property type="match status" value="9"/>
</dbReference>
<dbReference type="Gene3D" id="2.10.25.10">
    <property type="entry name" value="Laminin"/>
    <property type="match status" value="4"/>
</dbReference>
<dbReference type="InterPro" id="IPR050991">
    <property type="entry name" value="ECM_Regulatory_Proteins"/>
</dbReference>
<dbReference type="InterPro" id="IPR000742">
    <property type="entry name" value="EGF-like_dom"/>
</dbReference>
<dbReference type="InterPro" id="IPR036056">
    <property type="entry name" value="Fibrinogen-like_C"/>
</dbReference>
<dbReference type="InterPro" id="IPR014716">
    <property type="entry name" value="Fibrinogen_a/b/g_C_1"/>
</dbReference>
<dbReference type="InterPro" id="IPR002181">
    <property type="entry name" value="Fibrinogen_a/b/g_C_dom"/>
</dbReference>
<dbReference type="InterPro" id="IPR003961">
    <property type="entry name" value="FN3_dom"/>
</dbReference>
<dbReference type="InterPro" id="IPR036116">
    <property type="entry name" value="FN3_sf"/>
</dbReference>
<dbReference type="InterPro" id="IPR013783">
    <property type="entry name" value="Ig-like_fold"/>
</dbReference>
<dbReference type="NCBIfam" id="NF040941">
    <property type="entry name" value="GGGWT_bact"/>
    <property type="match status" value="1"/>
</dbReference>
<dbReference type="PANTHER" id="PTHR46708">
    <property type="entry name" value="TENASCIN"/>
    <property type="match status" value="1"/>
</dbReference>
<dbReference type="PANTHER" id="PTHR46708:SF13">
    <property type="entry name" value="TENASCIN-R"/>
    <property type="match status" value="1"/>
</dbReference>
<dbReference type="Pfam" id="PF25024">
    <property type="entry name" value="EGF_TEN"/>
    <property type="match status" value="1"/>
</dbReference>
<dbReference type="Pfam" id="PF23106">
    <property type="entry name" value="EGF_Teneurin"/>
    <property type="match status" value="1"/>
</dbReference>
<dbReference type="Pfam" id="PF00147">
    <property type="entry name" value="Fibrinogen_C"/>
    <property type="match status" value="1"/>
</dbReference>
<dbReference type="Pfam" id="PF00041">
    <property type="entry name" value="fn3"/>
    <property type="match status" value="9"/>
</dbReference>
<dbReference type="SMART" id="SM00181">
    <property type="entry name" value="EGF"/>
    <property type="match status" value="4"/>
</dbReference>
<dbReference type="SMART" id="SM00186">
    <property type="entry name" value="FBG"/>
    <property type="match status" value="1"/>
</dbReference>
<dbReference type="SMART" id="SM00060">
    <property type="entry name" value="FN3"/>
    <property type="match status" value="9"/>
</dbReference>
<dbReference type="SUPFAM" id="SSF56496">
    <property type="entry name" value="Fibrinogen C-terminal domain-like"/>
    <property type="match status" value="1"/>
</dbReference>
<dbReference type="SUPFAM" id="SSF49265">
    <property type="entry name" value="Fibronectin type III"/>
    <property type="match status" value="5"/>
</dbReference>
<dbReference type="PROSITE" id="PS00022">
    <property type="entry name" value="EGF_1"/>
    <property type="match status" value="5"/>
</dbReference>
<dbReference type="PROSITE" id="PS01186">
    <property type="entry name" value="EGF_2"/>
    <property type="match status" value="4"/>
</dbReference>
<dbReference type="PROSITE" id="PS51406">
    <property type="entry name" value="FIBRINOGEN_C_2"/>
    <property type="match status" value="1"/>
</dbReference>
<dbReference type="PROSITE" id="PS50853">
    <property type="entry name" value="FN3"/>
    <property type="match status" value="9"/>
</dbReference>
<reference key="1">
    <citation type="journal article" date="2005" name="Science">
        <title>The transcriptional landscape of the mammalian genome.</title>
        <authorList>
            <person name="Carninci P."/>
            <person name="Kasukawa T."/>
            <person name="Katayama S."/>
            <person name="Gough J."/>
            <person name="Frith M.C."/>
            <person name="Maeda N."/>
            <person name="Oyama R."/>
            <person name="Ravasi T."/>
            <person name="Lenhard B."/>
            <person name="Wells C."/>
            <person name="Kodzius R."/>
            <person name="Shimokawa K."/>
            <person name="Bajic V.B."/>
            <person name="Brenner S.E."/>
            <person name="Batalov S."/>
            <person name="Forrest A.R."/>
            <person name="Zavolan M."/>
            <person name="Davis M.J."/>
            <person name="Wilming L.G."/>
            <person name="Aidinis V."/>
            <person name="Allen J.E."/>
            <person name="Ambesi-Impiombato A."/>
            <person name="Apweiler R."/>
            <person name="Aturaliya R.N."/>
            <person name="Bailey T.L."/>
            <person name="Bansal M."/>
            <person name="Baxter L."/>
            <person name="Beisel K.W."/>
            <person name="Bersano T."/>
            <person name="Bono H."/>
            <person name="Chalk A.M."/>
            <person name="Chiu K.P."/>
            <person name="Choudhary V."/>
            <person name="Christoffels A."/>
            <person name="Clutterbuck D.R."/>
            <person name="Crowe M.L."/>
            <person name="Dalla E."/>
            <person name="Dalrymple B.P."/>
            <person name="de Bono B."/>
            <person name="Della Gatta G."/>
            <person name="di Bernardo D."/>
            <person name="Down T."/>
            <person name="Engstrom P."/>
            <person name="Fagiolini M."/>
            <person name="Faulkner G."/>
            <person name="Fletcher C.F."/>
            <person name="Fukushima T."/>
            <person name="Furuno M."/>
            <person name="Futaki S."/>
            <person name="Gariboldi M."/>
            <person name="Georgii-Hemming P."/>
            <person name="Gingeras T.R."/>
            <person name="Gojobori T."/>
            <person name="Green R.E."/>
            <person name="Gustincich S."/>
            <person name="Harbers M."/>
            <person name="Hayashi Y."/>
            <person name="Hensch T.K."/>
            <person name="Hirokawa N."/>
            <person name="Hill D."/>
            <person name="Huminiecki L."/>
            <person name="Iacono M."/>
            <person name="Ikeo K."/>
            <person name="Iwama A."/>
            <person name="Ishikawa T."/>
            <person name="Jakt M."/>
            <person name="Kanapin A."/>
            <person name="Katoh M."/>
            <person name="Kawasawa Y."/>
            <person name="Kelso J."/>
            <person name="Kitamura H."/>
            <person name="Kitano H."/>
            <person name="Kollias G."/>
            <person name="Krishnan S.P."/>
            <person name="Kruger A."/>
            <person name="Kummerfeld S.K."/>
            <person name="Kurochkin I.V."/>
            <person name="Lareau L.F."/>
            <person name="Lazarevic D."/>
            <person name="Lipovich L."/>
            <person name="Liu J."/>
            <person name="Liuni S."/>
            <person name="McWilliam S."/>
            <person name="Madan Babu M."/>
            <person name="Madera M."/>
            <person name="Marchionni L."/>
            <person name="Matsuda H."/>
            <person name="Matsuzawa S."/>
            <person name="Miki H."/>
            <person name="Mignone F."/>
            <person name="Miyake S."/>
            <person name="Morris K."/>
            <person name="Mottagui-Tabar S."/>
            <person name="Mulder N."/>
            <person name="Nakano N."/>
            <person name="Nakauchi H."/>
            <person name="Ng P."/>
            <person name="Nilsson R."/>
            <person name="Nishiguchi S."/>
            <person name="Nishikawa S."/>
            <person name="Nori F."/>
            <person name="Ohara O."/>
            <person name="Okazaki Y."/>
            <person name="Orlando V."/>
            <person name="Pang K.C."/>
            <person name="Pavan W.J."/>
            <person name="Pavesi G."/>
            <person name="Pesole G."/>
            <person name="Petrovsky N."/>
            <person name="Piazza S."/>
            <person name="Reed J."/>
            <person name="Reid J.F."/>
            <person name="Ring B.Z."/>
            <person name="Ringwald M."/>
            <person name="Rost B."/>
            <person name="Ruan Y."/>
            <person name="Salzberg S.L."/>
            <person name="Sandelin A."/>
            <person name="Schneider C."/>
            <person name="Schoenbach C."/>
            <person name="Sekiguchi K."/>
            <person name="Semple C.A."/>
            <person name="Seno S."/>
            <person name="Sessa L."/>
            <person name="Sheng Y."/>
            <person name="Shibata Y."/>
            <person name="Shimada H."/>
            <person name="Shimada K."/>
            <person name="Silva D."/>
            <person name="Sinclair B."/>
            <person name="Sperling S."/>
            <person name="Stupka E."/>
            <person name="Sugiura K."/>
            <person name="Sultana R."/>
            <person name="Takenaka Y."/>
            <person name="Taki K."/>
            <person name="Tammoja K."/>
            <person name="Tan S.L."/>
            <person name="Tang S."/>
            <person name="Taylor M.S."/>
            <person name="Tegner J."/>
            <person name="Teichmann S.A."/>
            <person name="Ueda H.R."/>
            <person name="van Nimwegen E."/>
            <person name="Verardo R."/>
            <person name="Wei C.L."/>
            <person name="Yagi K."/>
            <person name="Yamanishi H."/>
            <person name="Zabarovsky E."/>
            <person name="Zhu S."/>
            <person name="Zimmer A."/>
            <person name="Hide W."/>
            <person name="Bult C."/>
            <person name="Grimmond S.M."/>
            <person name="Teasdale R.D."/>
            <person name="Liu E.T."/>
            <person name="Brusic V."/>
            <person name="Quackenbush J."/>
            <person name="Wahlestedt C."/>
            <person name="Mattick J.S."/>
            <person name="Hume D.A."/>
            <person name="Kai C."/>
            <person name="Sasaki D."/>
            <person name="Tomaru Y."/>
            <person name="Fukuda S."/>
            <person name="Kanamori-Katayama M."/>
            <person name="Suzuki M."/>
            <person name="Aoki J."/>
            <person name="Arakawa T."/>
            <person name="Iida J."/>
            <person name="Imamura K."/>
            <person name="Itoh M."/>
            <person name="Kato T."/>
            <person name="Kawaji H."/>
            <person name="Kawagashira N."/>
            <person name="Kawashima T."/>
            <person name="Kojima M."/>
            <person name="Kondo S."/>
            <person name="Konno H."/>
            <person name="Nakano K."/>
            <person name="Ninomiya N."/>
            <person name="Nishio T."/>
            <person name="Okada M."/>
            <person name="Plessy C."/>
            <person name="Shibata K."/>
            <person name="Shiraki T."/>
            <person name="Suzuki S."/>
            <person name="Tagami M."/>
            <person name="Waki K."/>
            <person name="Watahiki A."/>
            <person name="Okamura-Oho Y."/>
            <person name="Suzuki H."/>
            <person name="Kawai J."/>
            <person name="Hayashizaki Y."/>
        </authorList>
    </citation>
    <scope>NUCLEOTIDE SEQUENCE [LARGE SCALE MRNA]</scope>
    <source>
        <strain>C57BL/6J</strain>
        <tissue>Spinal cord</tissue>
    </source>
</reference>
<reference key="2">
    <citation type="journal article" date="2004" name="Genome Res.">
        <title>The status, quality, and expansion of the NIH full-length cDNA project: the Mammalian Gene Collection (MGC).</title>
        <authorList>
            <consortium name="The MGC Project Team"/>
        </authorList>
    </citation>
    <scope>NUCLEOTIDE SEQUENCE [LARGE SCALE MRNA] (ISOFORM 1)</scope>
    <source>
        <tissue>Brain</tissue>
    </source>
</reference>
<reference key="3">
    <citation type="journal article" date="1999" name="J. Neurosci.">
        <title>Mice deficient for tenascin-r display alterations of the extracellular matrix and decreased axonal conduction velocities in the CNS.</title>
        <authorList>
            <person name="Weber P."/>
            <person name="Bartsch U."/>
            <person name="Rasband M.N."/>
            <person name="Czaniera R."/>
            <person name="Lang Y."/>
            <person name="Bluethmann H."/>
            <person name="Margolis R.U."/>
            <person name="Levinson S.R."/>
            <person name="Shrager P."/>
            <person name="Montag D."/>
        </authorList>
    </citation>
    <scope>NUCLEOTIDE SEQUENCE [MRNA] OF 1-24</scope>
    <source>
        <tissue>Brain</tissue>
    </source>
</reference>
<reference key="4">
    <citation type="journal article" date="1989" name="J. Cell Biol.">
        <title>J1-160 and J1-180 are oligodendrocyte-secreted nonpermissive substrates for cell adhesion.</title>
        <authorList>
            <person name="Pesheva P."/>
            <person name="Spiess E."/>
            <person name="Schachner M."/>
        </authorList>
    </citation>
    <scope>TISSUE SPECIFICITY</scope>
    <scope>ALTERNATIVE SPLICING</scope>
    <scope>DEVELOPMENTAL STAGE</scope>
</reference>
<reference key="5">
    <citation type="journal article" date="1993" name="Neuron">
        <title>The F3/11 cell adhesion molecule mediates the repulsion of neurons by the extracellular matrix glycoprotein J1-160/180.</title>
        <authorList>
            <person name="Pesheva P."/>
            <person name="Gennarini G."/>
            <person name="Goridis C."/>
            <person name="Schachner M."/>
        </authorList>
    </citation>
    <scope>INTERACTION WITH CNTN1</scope>
    <scope>FUNCTION</scope>
</reference>
<reference key="6">
    <citation type="journal article" date="1997" name="J. Neurosci.">
        <title>Tenascin-R is an intrinsic autocrine factor for oligodendrocyte differentiation and promotes cell adhesion by a sulfatide-mediated mechanism.</title>
        <authorList>
            <person name="Pesheva P."/>
            <person name="Gloor S."/>
            <person name="Schachner M."/>
            <person name="Probstmeier R."/>
        </authorList>
    </citation>
    <scope>FUNCTION</scope>
    <scope>BINDING TO MEMBRANE SURFACE SULFATIDES OF OLIGODENDROCYTES</scope>
</reference>
<reference key="7">
    <citation type="journal article" date="1999" name="Eur. J. Neurosci.">
        <title>Tenascin-R interferes with integrin-dependent oligodendrocyte precursor cell adhesion by a ganglioside-mediated signalling mechanism.</title>
        <authorList>
            <person name="Probstmeier R."/>
            <person name="Michels M."/>
            <person name="Franz T."/>
            <person name="Chan B.M.C."/>
            <person name="Pesheva P."/>
        </authorList>
    </citation>
    <scope>FUNCTION</scope>
    <scope>BINDING TO MEMBRANE SURFACE GANGLIOSIDES OF OLIGODENDROCYTES</scope>
</reference>
<reference key="8">
    <citation type="journal article" date="1999" name="Glycobiology">
        <title>Glycosylation of a CNS-specific extracellular matrix glycoprotein, tenascin-R, is dominated by O-linked sialylated glycans and 'brain-type' neutral N-glycans.</title>
        <authorList>
            <person name="Zamze S."/>
            <person name="Harvey D.J."/>
            <person name="Pesheva P."/>
            <person name="Mattu T.S."/>
            <person name="Schachner M."/>
            <person name="Dwek R.A."/>
            <person name="Wing D.R."/>
        </authorList>
    </citation>
    <scope>GLYCOSYLATION</scope>
</reference>
<reference key="9">
    <citation type="journal article" date="2000" name="Brain Res.">
        <title>Involvement of chondroitin sulfates on brain-derived tenascin-R in carbohydrate-dependent interactions with fibronectin and tenascin-C.</title>
        <authorList>
            <person name="Probstmeier R."/>
            <person name="Braunewell K.-H."/>
            <person name="Pesheva P."/>
        </authorList>
    </citation>
    <scope>GLYCOSYLATION</scope>
    <scope>INTERACTION WITH FN1 AND TNC</scope>
    <scope>FUNCTION</scope>
</reference>
<reference key="10">
    <citation type="journal article" date="2010" name="Cell">
        <title>A tissue-specific atlas of mouse protein phosphorylation and expression.</title>
        <authorList>
            <person name="Huttlin E.L."/>
            <person name="Jedrychowski M.P."/>
            <person name="Elias J.E."/>
            <person name="Goswami T."/>
            <person name="Rad R."/>
            <person name="Beausoleil S.A."/>
            <person name="Villen J."/>
            <person name="Haas W."/>
            <person name="Sowa M.E."/>
            <person name="Gygi S.P."/>
        </authorList>
    </citation>
    <scope>IDENTIFICATION BY MASS SPECTROMETRY [LARGE SCALE ANALYSIS]</scope>
    <source>
        <tissue>Brain</tissue>
    </source>
</reference>
<sequence length="1358" mass="149589">MGIDGETVVLKNMLIGVNLILLGSMLKPSECRLEVTTERAQRQTVEEEGGASSYNTSSKEQPMVFNHVYNINVPLESLCSSGLEASAEQDMSAEDDTLAEYIGQTSDHESQVTFTHKINLPKKACPCASSSQVLQELLSRIEMLEREVSLLRDQCNTNCCQESAATGQLDYVPHCSGHGNFSFESCGCICNEGWFGKNCSEPYCPLGCSSRGVCVDGQCICDSEYSGDDCSELRCPTDCSSRGLCVDGECVCEEPYTGEDCRELRCPGDCSGKGQCANGTCLCQEGYAGEDCSQRRCLNACSGRGHCQEGLCICEEGYQGPDCSAVAPPEDLRVAGISDRSIELEWDGPMAVTEYVISYQPTALGGLQLQQRVPGDWSGVTIMELEPGLTYNISVYAVISNILSLPITAKVATHLSTPQGLQFKTITETTVEVQWEPFSFSFDGWEISFIPKNNEGGVIAQLPSDVTSFNQTGLKPGEEYIVNVVALKEQARSPPTSASVSTVIDGPTQILVRDVSDTVAFVEWTPPRAKVDFILLKYGLVGGEGGKTTFRLQPPLSQYSVQALRPGSRYEVSISAVRGTNESEASSTQFTTEIDAPKNLRVGSRTATSLDLEWDNSEAEAQEYKVVYSTLAGEQYHEVLVPKGIGPTTKTTLTDLVPGTEYGVGISAVMNSKQSIPATMNARTELDSPRDLMVTASSETSISLIWTKASGPIDHYRITFTPSSGISSEVTVPRDRTSYTLTDLEPGAEYIISITAERGRQQSLESTVDAFTGFRPISHLHFSHVTSSSVNITWSDPSPPADRLILNYSPRDKEEDMLEVLLDATKRHAVLMGLQPATEYIVNLVAVHGTVTSEPIVGSITTGIDPPKNITISNVTKDSLTVSWSSPVAPFDYYRVSYRPTQVGRLDSSVVPNTVTEFAITRLYPATEYEISLNSVRGREESERICTLVHTAMDSPMDLIATNITPTEALLQWKAPMGEVENYVIVLTHFAIAGETILVDGVSEEFQLVDLLPSTHYTVTMYATSGPLMSGTIATNFSTLLDPPDNLTASEVTRQSALISWQPPRAAIENYVLTYKSTDGSRKELIVDAEDTWIRLEGLSENTDYTVLLQAAQEATRSSLTSTVFTTGGRVFSHPQDCAQHLMNGDTLSGVYTIFLNGELSHKLQVYCDMTTDGGGWIVFQRRQNGQTDFFRKWADYRVGFGNLEDEFWLGLDNIHRITAQGRYELRVDMRDGQEAVFAYYDKFAVEDSRSLYKIRIGSYNGTAGDSLSYHQGRPFSTEDRDNDVAVTNCAMSYKGAWWYKNCHRTNLNGKYGESRHSQGINWYHWKGHEFSIPFVEMKMRPYIHRLTAGRKRRALKF</sequence>
<accession>Q8BYI9</accession>
<accession>A2RT70</accession>
<accession>O88717</accession>
<evidence type="ECO:0000250" key="1"/>
<evidence type="ECO:0000250" key="2">
    <source>
        <dbReference type="UniProtKB" id="Q05546"/>
    </source>
</evidence>
<evidence type="ECO:0000255" key="3"/>
<evidence type="ECO:0000255" key="4">
    <source>
        <dbReference type="PROSITE-ProRule" id="PRU00316"/>
    </source>
</evidence>
<evidence type="ECO:0000255" key="5">
    <source>
        <dbReference type="PROSITE-ProRule" id="PRU00739"/>
    </source>
</evidence>
<evidence type="ECO:0000256" key="6">
    <source>
        <dbReference type="SAM" id="MobiDB-lite"/>
    </source>
</evidence>
<evidence type="ECO:0000269" key="7">
    <source>
    </source>
</evidence>
<evidence type="ECO:0000269" key="8">
    <source>
    </source>
</evidence>
<evidence type="ECO:0000269" key="9">
    <source>
    </source>
</evidence>
<evidence type="ECO:0000269" key="10">
    <source>
    </source>
</evidence>
<evidence type="ECO:0000269" key="11">
    <source>
    </source>
</evidence>
<evidence type="ECO:0000269" key="12">
    <source>
    </source>
</evidence>
<evidence type="ECO:0000305" key="13"/>
<organism>
    <name type="scientific">Mus musculus</name>
    <name type="common">Mouse</name>
    <dbReference type="NCBI Taxonomy" id="10090"/>
    <lineage>
        <taxon>Eukaryota</taxon>
        <taxon>Metazoa</taxon>
        <taxon>Chordata</taxon>
        <taxon>Craniata</taxon>
        <taxon>Vertebrata</taxon>
        <taxon>Euteleostomi</taxon>
        <taxon>Mammalia</taxon>
        <taxon>Eutheria</taxon>
        <taxon>Euarchontoglires</taxon>
        <taxon>Glires</taxon>
        <taxon>Rodentia</taxon>
        <taxon>Myomorpha</taxon>
        <taxon>Muroidea</taxon>
        <taxon>Muridae</taxon>
        <taxon>Murinae</taxon>
        <taxon>Mus</taxon>
        <taxon>Mus</taxon>
    </lineage>
</organism>
<gene>
    <name type="primary">Tnr</name>
</gene>
<keyword id="KW-0025">Alternative splicing</keyword>
<keyword id="KW-0130">Cell adhesion</keyword>
<keyword id="KW-0175">Coiled coil</keyword>
<keyword id="KW-1015">Disulfide bond</keyword>
<keyword id="KW-0245">EGF-like domain</keyword>
<keyword id="KW-0272">Extracellular matrix</keyword>
<keyword id="KW-0325">Glycoprotein</keyword>
<keyword id="KW-0597">Phosphoprotein</keyword>
<keyword id="KW-0654">Proteoglycan</keyword>
<keyword id="KW-1185">Reference proteome</keyword>
<keyword id="KW-0677">Repeat</keyword>
<keyword id="KW-0964">Secreted</keyword>
<keyword id="KW-0730">Sialic acid</keyword>
<keyword id="KW-0732">Signal</keyword>
<proteinExistence type="evidence at protein level"/>
<comment type="function">
    <text evidence="1 7 9 11 12">Neural extracellular matrix (ECM) protein involved in interactions with different cells and matrix components. Theses interactions can influence cellular behavior by either evoking a stable adhesion and differentiation, or repulsion and inhibition of neurite growth. Binding to cell surface gangliosides inhibits RGD-dependent integrin-mediated cell adhesion and results in an inhibition of PTK2/FAK1 (FAK) phosphorylation and cell detachment. Binding to membrane surface sulfatides results in a oligodendrocyte adhesion and differentiation. Interaction with CNTN1 induces a repulsion of neurons and an inhibition of neurite outgrowth. Interacts with SCN2B may play a crucial role in clustering and regulation of activity of sodium channels at nodes of Ranvier. TNR-linked chondroitin sulfate glycosaminoglycans are involved in the interaction with FN1 and mediates inhibition of cell adhesion and neurite outgrowth. The highly regulated addition of sulfated carbohydrate structure may modulate the adhesive properties of TNR over the course of development and during synapse maintenance (By similarity).</text>
</comment>
<comment type="subunit">
    <text evidence="1 9 11">Interacts with BCAN and ACAN in a calcium-dependent manner. Interacts with SCN2B, PTPRZ1, and CSPG3 (By similarity). Forms oligomers. Isoforms 1 and 2 form respectively trimeric (tribrachion) and dimeric kink-armed rodlike structures, which are linked by disulfide bridges. Interacts with CNTN1, TNC and FN1.</text>
</comment>
<comment type="subcellular location">
    <subcellularLocation>
        <location>Secreted</location>
        <location>Extracellular space</location>
        <location>Extracellular matrix</location>
    </subcellularLocation>
</comment>
<comment type="alternative products">
    <event type="alternative splicing"/>
    <isoform>
        <id>Q8BYI9-1</id>
        <name>1</name>
        <name>J1-180</name>
        <name>TN-R 180</name>
        <sequence type="displayed"/>
    </isoform>
    <isoform>
        <id>Q8BYI9-2</id>
        <name>2</name>
        <name>J1-160</name>
        <name>TN-R 160</name>
        <sequence type="described" ref="VSP_012994"/>
    </isoform>
</comment>
<comment type="tissue specificity">
    <text evidence="10">Brain-specific.</text>
</comment>
<comment type="developmental stage">
    <text evidence="10">Isoform 1 is barely detectable at 17 dpc and increases in intensity until postnatal day 15, when it reaches adult levels. Isoform 2 is detectable from postnatal day 5 and reaches adult levels also at postnatal day 15.</text>
</comment>
<comment type="domain">
    <text evidence="1">The EGF-like domains mediate interaction with CNTN1. The fibronectin type-III domains 3-5 mediate interaction with BCAN. The fibronectin type-III domains 1-2 and 7-9 mediate interaction with SCN2B (By similarity).</text>
</comment>
<comment type="PTM">
    <text evidence="1 8 9">Contains N-linked oligosaccharides with a sulfated carbohydrate structures (By similarity). Contains N-linked oligosaccharides, O-linked sialylated structures and O-linked chondroitin sulfate glycosaminoglycans.</text>
</comment>
<comment type="miscellaneous">
    <text>Knockout mice display alterations of the extracellular matrix, and decreased axonal conduction velocities in the CNS.</text>
</comment>
<comment type="similarity">
    <text evidence="13">Belongs to the tenascin family.</text>
</comment>
<protein>
    <recommendedName>
        <fullName>Tenascin-R</fullName>
        <shortName>TN-R</shortName>
    </recommendedName>
    <alternativeName>
        <fullName>Janusin</fullName>
    </alternativeName>
    <alternativeName>
        <fullName>Neural recognition molecule J1-160/180</fullName>
    </alternativeName>
    <alternativeName>
        <fullName>Restrictin</fullName>
    </alternativeName>
</protein>